<sequence>MIIAFKIVFVNIFSLQHNAAIEVSLTAEYAMHTLKTKIRRKSFHLQMYHTFLNIARKAEKI</sequence>
<accession>C0H411</accession>
<organism>
    <name type="scientific">Bacillus subtilis (strain 168)</name>
    <dbReference type="NCBI Taxonomy" id="224308"/>
    <lineage>
        <taxon>Bacteria</taxon>
        <taxon>Bacillati</taxon>
        <taxon>Bacillota</taxon>
        <taxon>Bacilli</taxon>
        <taxon>Bacillales</taxon>
        <taxon>Bacillaceae</taxon>
        <taxon>Bacillus</taxon>
    </lineage>
</organism>
<proteinExistence type="predicted"/>
<protein>
    <recommendedName>
        <fullName>Uncharacterized protein YlzH</fullName>
    </recommendedName>
</protein>
<reference key="1">
    <citation type="journal article" date="1997" name="Nature">
        <title>The complete genome sequence of the Gram-positive bacterium Bacillus subtilis.</title>
        <authorList>
            <person name="Kunst F."/>
            <person name="Ogasawara N."/>
            <person name="Moszer I."/>
            <person name="Albertini A.M."/>
            <person name="Alloni G."/>
            <person name="Azevedo V."/>
            <person name="Bertero M.G."/>
            <person name="Bessieres P."/>
            <person name="Bolotin A."/>
            <person name="Borchert S."/>
            <person name="Borriss R."/>
            <person name="Boursier L."/>
            <person name="Brans A."/>
            <person name="Braun M."/>
            <person name="Brignell S.C."/>
            <person name="Bron S."/>
            <person name="Brouillet S."/>
            <person name="Bruschi C.V."/>
            <person name="Caldwell B."/>
            <person name="Capuano V."/>
            <person name="Carter N.M."/>
            <person name="Choi S.-K."/>
            <person name="Codani J.-J."/>
            <person name="Connerton I.F."/>
            <person name="Cummings N.J."/>
            <person name="Daniel R.A."/>
            <person name="Denizot F."/>
            <person name="Devine K.M."/>
            <person name="Duesterhoeft A."/>
            <person name="Ehrlich S.D."/>
            <person name="Emmerson P.T."/>
            <person name="Entian K.-D."/>
            <person name="Errington J."/>
            <person name="Fabret C."/>
            <person name="Ferrari E."/>
            <person name="Foulger D."/>
            <person name="Fritz C."/>
            <person name="Fujita M."/>
            <person name="Fujita Y."/>
            <person name="Fuma S."/>
            <person name="Galizzi A."/>
            <person name="Galleron N."/>
            <person name="Ghim S.-Y."/>
            <person name="Glaser P."/>
            <person name="Goffeau A."/>
            <person name="Golightly E.J."/>
            <person name="Grandi G."/>
            <person name="Guiseppi G."/>
            <person name="Guy B.J."/>
            <person name="Haga K."/>
            <person name="Haiech J."/>
            <person name="Harwood C.R."/>
            <person name="Henaut A."/>
            <person name="Hilbert H."/>
            <person name="Holsappel S."/>
            <person name="Hosono S."/>
            <person name="Hullo M.-F."/>
            <person name="Itaya M."/>
            <person name="Jones L.-M."/>
            <person name="Joris B."/>
            <person name="Karamata D."/>
            <person name="Kasahara Y."/>
            <person name="Klaerr-Blanchard M."/>
            <person name="Klein C."/>
            <person name="Kobayashi Y."/>
            <person name="Koetter P."/>
            <person name="Koningstein G."/>
            <person name="Krogh S."/>
            <person name="Kumano M."/>
            <person name="Kurita K."/>
            <person name="Lapidus A."/>
            <person name="Lardinois S."/>
            <person name="Lauber J."/>
            <person name="Lazarevic V."/>
            <person name="Lee S.-M."/>
            <person name="Levine A."/>
            <person name="Liu H."/>
            <person name="Masuda S."/>
            <person name="Mauel C."/>
            <person name="Medigue C."/>
            <person name="Medina N."/>
            <person name="Mellado R.P."/>
            <person name="Mizuno M."/>
            <person name="Moestl D."/>
            <person name="Nakai S."/>
            <person name="Noback M."/>
            <person name="Noone D."/>
            <person name="O'Reilly M."/>
            <person name="Ogawa K."/>
            <person name="Ogiwara A."/>
            <person name="Oudega B."/>
            <person name="Park S.-H."/>
            <person name="Parro V."/>
            <person name="Pohl T.M."/>
            <person name="Portetelle D."/>
            <person name="Porwollik S."/>
            <person name="Prescott A.M."/>
            <person name="Presecan E."/>
            <person name="Pujic P."/>
            <person name="Purnelle B."/>
            <person name="Rapoport G."/>
            <person name="Rey M."/>
            <person name="Reynolds S."/>
            <person name="Rieger M."/>
            <person name="Rivolta C."/>
            <person name="Rocha E."/>
            <person name="Roche B."/>
            <person name="Rose M."/>
            <person name="Sadaie Y."/>
            <person name="Sato T."/>
            <person name="Scanlan E."/>
            <person name="Schleich S."/>
            <person name="Schroeter R."/>
            <person name="Scoffone F."/>
            <person name="Sekiguchi J."/>
            <person name="Sekowska A."/>
            <person name="Seror S.J."/>
            <person name="Serror P."/>
            <person name="Shin B.-S."/>
            <person name="Soldo B."/>
            <person name="Sorokin A."/>
            <person name="Tacconi E."/>
            <person name="Takagi T."/>
            <person name="Takahashi H."/>
            <person name="Takemaru K."/>
            <person name="Takeuchi M."/>
            <person name="Tamakoshi A."/>
            <person name="Tanaka T."/>
            <person name="Terpstra P."/>
            <person name="Tognoni A."/>
            <person name="Tosato V."/>
            <person name="Uchiyama S."/>
            <person name="Vandenbol M."/>
            <person name="Vannier F."/>
            <person name="Vassarotti A."/>
            <person name="Viari A."/>
            <person name="Wambutt R."/>
            <person name="Wedler E."/>
            <person name="Wedler H."/>
            <person name="Weitzenegger T."/>
            <person name="Winters P."/>
            <person name="Wipat A."/>
            <person name="Yamamoto H."/>
            <person name="Yamane K."/>
            <person name="Yasumoto K."/>
            <person name="Yata K."/>
            <person name="Yoshida K."/>
            <person name="Yoshikawa H.-F."/>
            <person name="Zumstein E."/>
            <person name="Yoshikawa H."/>
            <person name="Danchin A."/>
        </authorList>
    </citation>
    <scope>NUCLEOTIDE SEQUENCE [LARGE SCALE GENOMIC DNA]</scope>
    <source>
        <strain>168</strain>
    </source>
</reference>
<dbReference type="EMBL" id="AL009126">
    <property type="protein sequence ID" value="CAX52618.1"/>
    <property type="molecule type" value="Genomic_DNA"/>
</dbReference>
<dbReference type="RefSeq" id="WP_003232215.1">
    <property type="nucleotide sequence ID" value="NZ_OZ025638.1"/>
</dbReference>
<dbReference type="RefSeq" id="YP_003097727.1">
    <property type="nucleotide sequence ID" value="NC_000964.3"/>
</dbReference>
<dbReference type="STRING" id="224308.BSU15069"/>
<dbReference type="PaxDb" id="224308-BSU15069"/>
<dbReference type="EnsemblBacteria" id="CAX52618">
    <property type="protein sequence ID" value="CAX52618"/>
    <property type="gene ID" value="BSU_15069"/>
</dbReference>
<dbReference type="GeneID" id="8303049"/>
<dbReference type="KEGG" id="bsu:BSU15069"/>
<dbReference type="PATRIC" id="fig|224308.179.peg.1642"/>
<dbReference type="InParanoid" id="C0H411"/>
<dbReference type="OrthoDB" id="2910195at2"/>
<dbReference type="BioCyc" id="BSUB:BSU15069-MONOMER"/>
<dbReference type="Proteomes" id="UP000001570">
    <property type="component" value="Chromosome"/>
</dbReference>
<name>YLZH_BACSU</name>
<gene>
    <name type="primary">ylzH</name>
    <name type="ordered locus">BSU15069</name>
</gene>
<keyword id="KW-1185">Reference proteome</keyword>
<feature type="chain" id="PRO_0000382667" description="Uncharacterized protein YlzH">
    <location>
        <begin position="1"/>
        <end position="61"/>
    </location>
</feature>